<accession>Q5XD71</accession>
<accession>P82557</accession>
<accession>Q9A0W5</accession>
<dbReference type="EC" id="2.7.11.-"/>
<dbReference type="EC" id="2.7.4.-"/>
<dbReference type="EMBL" id="CP000003">
    <property type="protein sequence ID" value="AAT86642.1"/>
    <property type="status" value="ALT_INIT"/>
    <property type="molecule type" value="Genomic_DNA"/>
</dbReference>
<dbReference type="RefSeq" id="WP_002990580.1">
    <property type="nucleotide sequence ID" value="NC_006086.1"/>
</dbReference>
<dbReference type="SMR" id="Q5XD71"/>
<dbReference type="GeneID" id="69901202"/>
<dbReference type="KEGG" id="spa:M6_Spy0507"/>
<dbReference type="HOGENOM" id="CLU_052030_0_1_9"/>
<dbReference type="Proteomes" id="UP000001167">
    <property type="component" value="Chromosome"/>
</dbReference>
<dbReference type="GO" id="GO:0005524">
    <property type="term" value="F:ATP binding"/>
    <property type="evidence" value="ECO:0007669"/>
    <property type="project" value="UniProtKB-UniRule"/>
</dbReference>
<dbReference type="GO" id="GO:0000287">
    <property type="term" value="F:magnesium ion binding"/>
    <property type="evidence" value="ECO:0007669"/>
    <property type="project" value="UniProtKB-UniRule"/>
</dbReference>
<dbReference type="GO" id="GO:0000155">
    <property type="term" value="F:phosphorelay sensor kinase activity"/>
    <property type="evidence" value="ECO:0007669"/>
    <property type="project" value="InterPro"/>
</dbReference>
<dbReference type="GO" id="GO:0004674">
    <property type="term" value="F:protein serine/threonine kinase activity"/>
    <property type="evidence" value="ECO:0007669"/>
    <property type="project" value="UniProtKB-KW"/>
</dbReference>
<dbReference type="GO" id="GO:0004712">
    <property type="term" value="F:protein serine/threonine/tyrosine kinase activity"/>
    <property type="evidence" value="ECO:0007669"/>
    <property type="project" value="UniProtKB-UniRule"/>
</dbReference>
<dbReference type="GO" id="GO:0006109">
    <property type="term" value="P:regulation of carbohydrate metabolic process"/>
    <property type="evidence" value="ECO:0007669"/>
    <property type="project" value="UniProtKB-UniRule"/>
</dbReference>
<dbReference type="CDD" id="cd01918">
    <property type="entry name" value="HprK_C"/>
    <property type="match status" value="1"/>
</dbReference>
<dbReference type="FunFam" id="3.40.50.300:FF:000174">
    <property type="entry name" value="HPr kinase/phosphorylase"/>
    <property type="match status" value="1"/>
</dbReference>
<dbReference type="Gene3D" id="3.40.1390.20">
    <property type="entry name" value="HprK N-terminal domain-like"/>
    <property type="match status" value="1"/>
</dbReference>
<dbReference type="Gene3D" id="3.40.50.300">
    <property type="entry name" value="P-loop containing nucleotide triphosphate hydrolases"/>
    <property type="match status" value="1"/>
</dbReference>
<dbReference type="HAMAP" id="MF_01249">
    <property type="entry name" value="HPr_kinase"/>
    <property type="match status" value="1"/>
</dbReference>
<dbReference type="InterPro" id="IPR003755">
    <property type="entry name" value="HPr(Ser)_kin/Pase"/>
</dbReference>
<dbReference type="InterPro" id="IPR011104">
    <property type="entry name" value="Hpr_kin/Pase_C"/>
</dbReference>
<dbReference type="InterPro" id="IPR011126">
    <property type="entry name" value="Hpr_kin/Pase_Hpr_N"/>
</dbReference>
<dbReference type="InterPro" id="IPR027417">
    <property type="entry name" value="P-loop_NTPase"/>
</dbReference>
<dbReference type="InterPro" id="IPR028979">
    <property type="entry name" value="Ser_kin/Pase_Hpr-like_N_sf"/>
</dbReference>
<dbReference type="NCBIfam" id="TIGR00679">
    <property type="entry name" value="hpr-ser"/>
    <property type="match status" value="1"/>
</dbReference>
<dbReference type="PANTHER" id="PTHR30305:SF1">
    <property type="entry name" value="HPR KINASE_PHOSPHORYLASE"/>
    <property type="match status" value="1"/>
</dbReference>
<dbReference type="PANTHER" id="PTHR30305">
    <property type="entry name" value="PROTEIN YJDM-RELATED"/>
    <property type="match status" value="1"/>
</dbReference>
<dbReference type="Pfam" id="PF07475">
    <property type="entry name" value="Hpr_kinase_C"/>
    <property type="match status" value="1"/>
</dbReference>
<dbReference type="Pfam" id="PF02603">
    <property type="entry name" value="Hpr_kinase_N"/>
    <property type="match status" value="1"/>
</dbReference>
<dbReference type="SUPFAM" id="SSF75138">
    <property type="entry name" value="HprK N-terminal domain-like"/>
    <property type="match status" value="1"/>
</dbReference>
<dbReference type="SUPFAM" id="SSF53795">
    <property type="entry name" value="PEP carboxykinase-like"/>
    <property type="match status" value="1"/>
</dbReference>
<proteinExistence type="evidence at protein level"/>
<comment type="function">
    <text evidence="1">Catalyzes the ATP- as well as the pyrophosphate-dependent phosphorylation of a specific serine residue in HPr, a phosphocarrier protein of the phosphoenolpyruvate-dependent sugar phosphotransferase system (PTS). HprK/P also catalyzes the pyrophosphate-producing, inorganic phosphate-dependent dephosphorylation (phosphorolysis) of seryl-phosphorylated HPr (P-Ser-HPr). The two antagonistic activities of HprK/P are regulated by several intracellular metabolites, which change their concentration in response to the absence or presence of rapidly metabolisable carbon sources (glucose, fructose, etc.) in the growth medium. Therefore, by controlling the phosphorylation state of HPr, HPrK/P is a sensor enzyme that plays a major role in the regulation of carbon metabolism and sugar transport: it mediates carbon catabolite repression (CCR), and regulates PTS-catalyzed carbohydrate uptake and inducer exclusion (By similarity).</text>
</comment>
<comment type="catalytic activity">
    <reaction>
        <text>[HPr protein]-L-serine + ATP = [HPr protein]-O-phospho-L-serine + ADP + H(+)</text>
        <dbReference type="Rhea" id="RHEA:46600"/>
        <dbReference type="Rhea" id="RHEA-COMP:11602"/>
        <dbReference type="Rhea" id="RHEA-COMP:11603"/>
        <dbReference type="ChEBI" id="CHEBI:15378"/>
        <dbReference type="ChEBI" id="CHEBI:29999"/>
        <dbReference type="ChEBI" id="CHEBI:30616"/>
        <dbReference type="ChEBI" id="CHEBI:83421"/>
        <dbReference type="ChEBI" id="CHEBI:456216"/>
    </reaction>
</comment>
<comment type="catalytic activity">
    <reaction>
        <text>[HPr protein]-O-phospho-L-serine + phosphate + H(+) = [HPr protein]-L-serine + diphosphate</text>
        <dbReference type="Rhea" id="RHEA:46604"/>
        <dbReference type="Rhea" id="RHEA-COMP:11602"/>
        <dbReference type="Rhea" id="RHEA-COMP:11603"/>
        <dbReference type="ChEBI" id="CHEBI:15378"/>
        <dbReference type="ChEBI" id="CHEBI:29999"/>
        <dbReference type="ChEBI" id="CHEBI:33019"/>
        <dbReference type="ChEBI" id="CHEBI:43474"/>
        <dbReference type="ChEBI" id="CHEBI:83421"/>
    </reaction>
</comment>
<comment type="cofactor">
    <cofactor evidence="1">
        <name>Mg(2+)</name>
        <dbReference type="ChEBI" id="CHEBI:18420"/>
    </cofactor>
</comment>
<comment type="subunit">
    <text evidence="1">Homohexamer.</text>
</comment>
<comment type="domain">
    <text evidence="1">The Walker A ATP-binding motif also binds Pi and PPi.</text>
</comment>
<comment type="mass spectrometry" mass="34587.75" method="Electrospray" evidence="3"/>
<comment type="miscellaneous">
    <text evidence="1">Both phosphorylation and phosphorolysis are carried out by the same active site and suggest a common mechanism for both reactions.</text>
</comment>
<comment type="similarity">
    <text evidence="4">Belongs to the HPrK/P family.</text>
</comment>
<comment type="sequence caution" evidence="4">
    <conflict type="erroneous initiation">
        <sequence resource="EMBL-CDS" id="AAT86642"/>
    </conflict>
</comment>
<keyword id="KW-0067">ATP-binding</keyword>
<keyword id="KW-0119">Carbohydrate metabolism</keyword>
<keyword id="KW-0903">Direct protein sequencing</keyword>
<keyword id="KW-0418">Kinase</keyword>
<keyword id="KW-0460">Magnesium</keyword>
<keyword id="KW-0479">Metal-binding</keyword>
<keyword id="KW-0511">Multifunctional enzyme</keyword>
<keyword id="KW-0547">Nucleotide-binding</keyword>
<keyword id="KW-0723">Serine/threonine-protein kinase</keyword>
<keyword id="KW-0808">Transferase</keyword>
<protein>
    <recommendedName>
        <fullName>HPr kinase/phosphorylase</fullName>
        <shortName>HPrK/P</shortName>
        <ecNumber>2.7.11.-</ecNumber>
        <ecNumber>2.7.4.-</ecNumber>
    </recommendedName>
    <alternativeName>
        <fullName>HPr(Ser) kinase/phosphorylase</fullName>
    </alternativeName>
</protein>
<feature type="chain" id="PRO_0000059000" description="HPr kinase/phosphorylase">
    <location>
        <begin position="1"/>
        <end position="310"/>
    </location>
</feature>
<feature type="region of interest" description="Important for the catalytic mechanism of both phosphorylation and dephosphorylation" evidence="1">
    <location>
        <begin position="201"/>
        <end position="210"/>
    </location>
</feature>
<feature type="region of interest" description="Important for the catalytic mechanism of dephosphorylation" evidence="1">
    <location>
        <begin position="264"/>
        <end position="269"/>
    </location>
</feature>
<feature type="active site" evidence="1">
    <location>
        <position position="138"/>
    </location>
</feature>
<feature type="active site" evidence="1">
    <location>
        <position position="159"/>
    </location>
</feature>
<feature type="active site" description="Proton acceptor; for phosphorylation activity. Proton donor; for dephosphorylation activity" evidence="1">
    <location>
        <position position="177"/>
    </location>
</feature>
<feature type="active site" evidence="1">
    <location>
        <position position="243"/>
    </location>
</feature>
<feature type="binding site" evidence="1">
    <location>
        <begin position="153"/>
        <end position="160"/>
    </location>
    <ligand>
        <name>ATP</name>
        <dbReference type="ChEBI" id="CHEBI:30616"/>
    </ligand>
</feature>
<feature type="binding site" evidence="2">
    <location>
        <position position="160"/>
    </location>
    <ligand>
        <name>Mg(2+)</name>
        <dbReference type="ChEBI" id="CHEBI:18420"/>
    </ligand>
</feature>
<feature type="binding site" evidence="2">
    <location>
        <position position="202"/>
    </location>
    <ligand>
        <name>Mg(2+)</name>
        <dbReference type="ChEBI" id="CHEBI:18420"/>
    </ligand>
</feature>
<reference key="1">
    <citation type="journal article" date="2004" name="J. Infect. Dis.">
        <title>Progress toward characterization of the group A Streptococcus metagenome: complete genome sequence of a macrolide-resistant serotype M6 strain.</title>
        <authorList>
            <person name="Banks D.J."/>
            <person name="Porcella S.F."/>
            <person name="Barbian K.D."/>
            <person name="Beres S.B."/>
            <person name="Philips L.E."/>
            <person name="Voyich J.M."/>
            <person name="DeLeo F.R."/>
            <person name="Martin J.M."/>
            <person name="Somerville G.A."/>
            <person name="Musser J.M."/>
        </authorList>
    </citation>
    <scope>NUCLEOTIDE SEQUENCE [LARGE SCALE GENOMIC DNA]</scope>
    <source>
        <strain>ATCC BAA-946 / MGAS10394</strain>
    </source>
</reference>
<reference key="2">
    <citation type="submission" date="2000-05" db="UniProtKB">
        <title>Two-dimensional gel electrophoresis map of Streptococcus pyogenes proteins.</title>
        <authorList>
            <person name="Hogan D.A."/>
            <person name="Du P."/>
            <person name="Stevenson T.I."/>
            <person name="Whitton M."/>
            <person name="Kilby G.W."/>
            <person name="Rogers J."/>
            <person name="VanBogelen R.A."/>
        </authorList>
    </citation>
    <scope>PROTEIN SEQUENCE OF 14-26; 104-113; 205-221 AND 244-257</scope>
    <scope>MASS SPECTROMETRY</scope>
    <source>
        <strain>JRS4 / Serotype M6</strain>
    </source>
</reference>
<organism>
    <name type="scientific">Streptococcus pyogenes serotype M6 (strain ATCC BAA-946 / MGAS10394)</name>
    <dbReference type="NCBI Taxonomy" id="286636"/>
    <lineage>
        <taxon>Bacteria</taxon>
        <taxon>Bacillati</taxon>
        <taxon>Bacillota</taxon>
        <taxon>Bacilli</taxon>
        <taxon>Lactobacillales</taxon>
        <taxon>Streptococcaceae</taxon>
        <taxon>Streptococcus</taxon>
    </lineage>
</organism>
<sequence length="310" mass="34570">MTVTVKMLVQKVKLDVVYATDNLLSKEITTSDISRPGLEMTGYFDYYAPERLQLFGMKEWSYLTQMTSHNRYSVLKEMFKKDTPAVVVSRNLAIPKEMVQAAKEEGISLLSSRVSTSRLAGEMSYFLDASLAERTSVHGVLMDIYGMGVLIQGDSGIGKSETGLELVKRGHRLVADDRVDVYAKDEETLWGEPAEILRHLLEIRGVGIIDVMSLYGASAVKDSSQVQLAIYLENFEAGKVFDRLGNGNEEITFSGVRIPRIRIPVKTGRNVSVVIEAAAMNHRAKEMGFDATKTFEDRLTQLITKNEVSQ</sequence>
<evidence type="ECO:0000250" key="1"/>
<evidence type="ECO:0000255" key="2"/>
<evidence type="ECO:0000269" key="3">
    <source ref="2"/>
</evidence>
<evidence type="ECO:0000305" key="4"/>
<name>HPRK_STRP6</name>
<gene>
    <name type="primary">hprK</name>
    <name type="ordered locus">M6_Spy0507</name>
</gene>